<gene>
    <name evidence="1" type="primary">rpsT</name>
    <name type="ordered locus">PP_0600</name>
</gene>
<sequence length="92" mass="10069">MANTPSAKKRAKQAEKRRSHNASLRSMVRTYIKNVVKAIDAKDAEKAQAAYVLAVPVIDRMADKGIIHKNKAARHKGRLNGHIKALKEAAAA</sequence>
<comment type="function">
    <text evidence="1">Binds directly to 16S ribosomal RNA.</text>
</comment>
<comment type="similarity">
    <text evidence="1">Belongs to the bacterial ribosomal protein bS20 family.</text>
</comment>
<accession>Q88Q95</accession>
<dbReference type="EMBL" id="AE015451">
    <property type="protein sequence ID" value="AAN66226.1"/>
    <property type="molecule type" value="Genomic_DNA"/>
</dbReference>
<dbReference type="RefSeq" id="NP_742762.1">
    <property type="nucleotide sequence ID" value="NC_002947.4"/>
</dbReference>
<dbReference type="RefSeq" id="WP_003247625.1">
    <property type="nucleotide sequence ID" value="NZ_CP169744.1"/>
</dbReference>
<dbReference type="SMR" id="Q88Q95"/>
<dbReference type="STRING" id="160488.PP_0600"/>
<dbReference type="PaxDb" id="160488-PP_0600"/>
<dbReference type="GeneID" id="97166133"/>
<dbReference type="KEGG" id="ppu:PP_0600"/>
<dbReference type="PATRIC" id="fig|160488.4.peg.640"/>
<dbReference type="eggNOG" id="COG0268">
    <property type="taxonomic scope" value="Bacteria"/>
</dbReference>
<dbReference type="HOGENOM" id="CLU_160655_4_0_6"/>
<dbReference type="OrthoDB" id="9807974at2"/>
<dbReference type="PhylomeDB" id="Q88Q95"/>
<dbReference type="BioCyc" id="PPUT160488:G1G01-657-MONOMER"/>
<dbReference type="Proteomes" id="UP000000556">
    <property type="component" value="Chromosome"/>
</dbReference>
<dbReference type="GO" id="GO:0005829">
    <property type="term" value="C:cytosol"/>
    <property type="evidence" value="ECO:0007669"/>
    <property type="project" value="TreeGrafter"/>
</dbReference>
<dbReference type="GO" id="GO:0015935">
    <property type="term" value="C:small ribosomal subunit"/>
    <property type="evidence" value="ECO:0007669"/>
    <property type="project" value="TreeGrafter"/>
</dbReference>
<dbReference type="GO" id="GO:0070181">
    <property type="term" value="F:small ribosomal subunit rRNA binding"/>
    <property type="evidence" value="ECO:0007669"/>
    <property type="project" value="TreeGrafter"/>
</dbReference>
<dbReference type="GO" id="GO:0003735">
    <property type="term" value="F:structural constituent of ribosome"/>
    <property type="evidence" value="ECO:0007669"/>
    <property type="project" value="InterPro"/>
</dbReference>
<dbReference type="GO" id="GO:0006412">
    <property type="term" value="P:translation"/>
    <property type="evidence" value="ECO:0007669"/>
    <property type="project" value="UniProtKB-UniRule"/>
</dbReference>
<dbReference type="FunFam" id="1.20.58.110:FF:000001">
    <property type="entry name" value="30S ribosomal protein S20"/>
    <property type="match status" value="1"/>
</dbReference>
<dbReference type="Gene3D" id="1.20.58.110">
    <property type="entry name" value="Ribosomal protein S20"/>
    <property type="match status" value="1"/>
</dbReference>
<dbReference type="HAMAP" id="MF_00500">
    <property type="entry name" value="Ribosomal_bS20"/>
    <property type="match status" value="1"/>
</dbReference>
<dbReference type="InterPro" id="IPR002583">
    <property type="entry name" value="Ribosomal_bS20"/>
</dbReference>
<dbReference type="InterPro" id="IPR036510">
    <property type="entry name" value="Ribosomal_bS20_sf"/>
</dbReference>
<dbReference type="NCBIfam" id="TIGR00029">
    <property type="entry name" value="S20"/>
    <property type="match status" value="1"/>
</dbReference>
<dbReference type="PANTHER" id="PTHR33398">
    <property type="entry name" value="30S RIBOSOMAL PROTEIN S20"/>
    <property type="match status" value="1"/>
</dbReference>
<dbReference type="PANTHER" id="PTHR33398:SF1">
    <property type="entry name" value="SMALL RIBOSOMAL SUBUNIT PROTEIN BS20C"/>
    <property type="match status" value="1"/>
</dbReference>
<dbReference type="Pfam" id="PF01649">
    <property type="entry name" value="Ribosomal_S20p"/>
    <property type="match status" value="1"/>
</dbReference>
<dbReference type="SUPFAM" id="SSF46992">
    <property type="entry name" value="Ribosomal protein S20"/>
    <property type="match status" value="1"/>
</dbReference>
<feature type="chain" id="PRO_0000168015" description="Small ribosomal subunit protein bS20">
    <location>
        <begin position="1"/>
        <end position="92"/>
    </location>
</feature>
<feature type="region of interest" description="Disordered" evidence="2">
    <location>
        <begin position="1"/>
        <end position="23"/>
    </location>
</feature>
<feature type="compositionally biased region" description="Basic residues" evidence="2">
    <location>
        <begin position="7"/>
        <end position="20"/>
    </location>
</feature>
<reference key="1">
    <citation type="journal article" date="2002" name="Environ. Microbiol.">
        <title>Complete genome sequence and comparative analysis of the metabolically versatile Pseudomonas putida KT2440.</title>
        <authorList>
            <person name="Nelson K.E."/>
            <person name="Weinel C."/>
            <person name="Paulsen I.T."/>
            <person name="Dodson R.J."/>
            <person name="Hilbert H."/>
            <person name="Martins dos Santos V.A.P."/>
            <person name="Fouts D.E."/>
            <person name="Gill S.R."/>
            <person name="Pop M."/>
            <person name="Holmes M."/>
            <person name="Brinkac L.M."/>
            <person name="Beanan M.J."/>
            <person name="DeBoy R.T."/>
            <person name="Daugherty S.C."/>
            <person name="Kolonay J.F."/>
            <person name="Madupu R."/>
            <person name="Nelson W.C."/>
            <person name="White O."/>
            <person name="Peterson J.D."/>
            <person name="Khouri H.M."/>
            <person name="Hance I."/>
            <person name="Chris Lee P."/>
            <person name="Holtzapple E.K."/>
            <person name="Scanlan D."/>
            <person name="Tran K."/>
            <person name="Moazzez A."/>
            <person name="Utterback T.R."/>
            <person name="Rizzo M."/>
            <person name="Lee K."/>
            <person name="Kosack D."/>
            <person name="Moestl D."/>
            <person name="Wedler H."/>
            <person name="Lauber J."/>
            <person name="Stjepandic D."/>
            <person name="Hoheisel J."/>
            <person name="Straetz M."/>
            <person name="Heim S."/>
            <person name="Kiewitz C."/>
            <person name="Eisen J.A."/>
            <person name="Timmis K.N."/>
            <person name="Duesterhoeft A."/>
            <person name="Tuemmler B."/>
            <person name="Fraser C.M."/>
        </authorList>
    </citation>
    <scope>NUCLEOTIDE SEQUENCE [LARGE SCALE GENOMIC DNA]</scope>
    <source>
        <strain>ATCC 47054 / DSM 6125 / CFBP 8728 / NCIMB 11950 / KT2440</strain>
    </source>
</reference>
<evidence type="ECO:0000255" key="1">
    <source>
        <dbReference type="HAMAP-Rule" id="MF_00500"/>
    </source>
</evidence>
<evidence type="ECO:0000256" key="2">
    <source>
        <dbReference type="SAM" id="MobiDB-lite"/>
    </source>
</evidence>
<evidence type="ECO:0000305" key="3"/>
<name>RS20_PSEPK</name>
<organism>
    <name type="scientific">Pseudomonas putida (strain ATCC 47054 / DSM 6125 / CFBP 8728 / NCIMB 11950 / KT2440)</name>
    <dbReference type="NCBI Taxonomy" id="160488"/>
    <lineage>
        <taxon>Bacteria</taxon>
        <taxon>Pseudomonadati</taxon>
        <taxon>Pseudomonadota</taxon>
        <taxon>Gammaproteobacteria</taxon>
        <taxon>Pseudomonadales</taxon>
        <taxon>Pseudomonadaceae</taxon>
        <taxon>Pseudomonas</taxon>
    </lineage>
</organism>
<protein>
    <recommendedName>
        <fullName evidence="1">Small ribosomal subunit protein bS20</fullName>
    </recommendedName>
    <alternativeName>
        <fullName evidence="3">30S ribosomal protein S20</fullName>
    </alternativeName>
</protein>
<keyword id="KW-1185">Reference proteome</keyword>
<keyword id="KW-0687">Ribonucleoprotein</keyword>
<keyword id="KW-0689">Ribosomal protein</keyword>
<keyword id="KW-0694">RNA-binding</keyword>
<keyword id="KW-0699">rRNA-binding</keyword>
<proteinExistence type="inferred from homology"/>